<accession>Q5NI92</accession>
<name>LPXC_FRATT</name>
<comment type="function">
    <text evidence="1">Catalyzes the hydrolysis of UDP-3-O-myristoyl-N-acetylglucosamine to form UDP-3-O-myristoylglucosamine and acetate, the committed step in lipid A biosynthesis.</text>
</comment>
<comment type="catalytic activity">
    <reaction evidence="1">
        <text>a UDP-3-O-[(3R)-3-hydroxyacyl]-N-acetyl-alpha-D-glucosamine + H2O = a UDP-3-O-[(3R)-3-hydroxyacyl]-alpha-D-glucosamine + acetate</text>
        <dbReference type="Rhea" id="RHEA:67816"/>
        <dbReference type="ChEBI" id="CHEBI:15377"/>
        <dbReference type="ChEBI" id="CHEBI:30089"/>
        <dbReference type="ChEBI" id="CHEBI:137740"/>
        <dbReference type="ChEBI" id="CHEBI:173225"/>
        <dbReference type="EC" id="3.5.1.108"/>
    </reaction>
</comment>
<comment type="cofactor">
    <cofactor evidence="1">
        <name>Zn(2+)</name>
        <dbReference type="ChEBI" id="CHEBI:29105"/>
    </cofactor>
</comment>
<comment type="pathway">
    <text evidence="1">Glycolipid biosynthesis; lipid IV(A) biosynthesis; lipid IV(A) from (3R)-3-hydroxytetradecanoyl-[acyl-carrier-protein] and UDP-N-acetyl-alpha-D-glucosamine: step 2/6.</text>
</comment>
<comment type="similarity">
    <text evidence="1">Belongs to the LpxC family.</text>
</comment>
<feature type="chain" id="PRO_1000122793" description="UDP-3-O-acyl-N-acetylglucosamine deacetylase">
    <location>
        <begin position="1"/>
        <end position="286"/>
    </location>
</feature>
<feature type="active site" description="Proton donor" evidence="1">
    <location>
        <position position="266"/>
    </location>
</feature>
<feature type="binding site" evidence="1">
    <location>
        <position position="81"/>
    </location>
    <ligand>
        <name>Zn(2+)</name>
        <dbReference type="ChEBI" id="CHEBI:29105"/>
    </ligand>
</feature>
<feature type="binding site" evidence="1">
    <location>
        <position position="240"/>
    </location>
    <ligand>
        <name>Zn(2+)</name>
        <dbReference type="ChEBI" id="CHEBI:29105"/>
    </ligand>
</feature>
<feature type="binding site" evidence="1">
    <location>
        <position position="244"/>
    </location>
    <ligand>
        <name>Zn(2+)</name>
        <dbReference type="ChEBI" id="CHEBI:29105"/>
    </ligand>
</feature>
<keyword id="KW-0378">Hydrolase</keyword>
<keyword id="KW-0441">Lipid A biosynthesis</keyword>
<keyword id="KW-0444">Lipid biosynthesis</keyword>
<keyword id="KW-0443">Lipid metabolism</keyword>
<keyword id="KW-0479">Metal-binding</keyword>
<keyword id="KW-1185">Reference proteome</keyword>
<keyword id="KW-0862">Zinc</keyword>
<gene>
    <name evidence="1" type="primary">lpxC</name>
    <name type="ordered locus">FTT_0189</name>
</gene>
<reference key="1">
    <citation type="journal article" date="2005" name="Nat. Genet.">
        <title>The complete genome sequence of Francisella tularensis, the causative agent of tularemia.</title>
        <authorList>
            <person name="Larsson P."/>
            <person name="Oyston P.C.F."/>
            <person name="Chain P."/>
            <person name="Chu M.C."/>
            <person name="Duffield M."/>
            <person name="Fuxelius H.-H."/>
            <person name="Garcia E."/>
            <person name="Haelltorp G."/>
            <person name="Johansson D."/>
            <person name="Isherwood K.E."/>
            <person name="Karp P.D."/>
            <person name="Larsson E."/>
            <person name="Liu Y."/>
            <person name="Michell S."/>
            <person name="Prior J."/>
            <person name="Prior R."/>
            <person name="Malfatti S."/>
            <person name="Sjoestedt A."/>
            <person name="Svensson K."/>
            <person name="Thompson N."/>
            <person name="Vergez L."/>
            <person name="Wagg J.K."/>
            <person name="Wren B.W."/>
            <person name="Lindler L.E."/>
            <person name="Andersson S.G.E."/>
            <person name="Forsman M."/>
            <person name="Titball R.W."/>
        </authorList>
    </citation>
    <scope>NUCLEOTIDE SEQUENCE [LARGE SCALE GENOMIC DNA]</scope>
    <source>
        <strain>SCHU S4 / Schu 4</strain>
    </source>
</reference>
<organism>
    <name type="scientific">Francisella tularensis subsp. tularensis (strain SCHU S4 / Schu 4)</name>
    <dbReference type="NCBI Taxonomy" id="177416"/>
    <lineage>
        <taxon>Bacteria</taxon>
        <taxon>Pseudomonadati</taxon>
        <taxon>Pseudomonadota</taxon>
        <taxon>Gammaproteobacteria</taxon>
        <taxon>Thiotrichales</taxon>
        <taxon>Francisellaceae</taxon>
        <taxon>Francisella</taxon>
    </lineage>
</organism>
<evidence type="ECO:0000255" key="1">
    <source>
        <dbReference type="HAMAP-Rule" id="MF_00388"/>
    </source>
</evidence>
<sequence>MMKQKTIAKEFSVTGVGLHSGVDVSMTVKPADIDSGIVFRRADLTPVVDIKVTPSSIKEAIMCTLLTKDGDQNLSVSTIEHLMSAFAMFEVDNVLIEVNAPELPVMDGSSYEFTQLLKQVGIVEQNSARKGIKILKPVRVEHEDKFAEVLPSDTLKYEFKIHWDHPVIAATNDHIVFEYDLDEYIKMVSKARTFGFYEQLAYLHQNNLAKGASLDNAVGVTNEGVLNEGGLRYDDEFVRHKLLDAIGDFYVGGYILGHFNCFKSGHTLNNKLLHAVFADKDAWEYI</sequence>
<proteinExistence type="inferred from homology"/>
<protein>
    <recommendedName>
        <fullName evidence="1">UDP-3-O-acyl-N-acetylglucosamine deacetylase</fullName>
        <shortName evidence="1">UDP-3-O-acyl-GlcNAc deacetylase</shortName>
        <ecNumber evidence="1">3.5.1.108</ecNumber>
    </recommendedName>
    <alternativeName>
        <fullName evidence="1">UDP-3-O-[R-3-hydroxymyristoyl]-N-acetylglucosamine deacetylase</fullName>
    </alternativeName>
</protein>
<dbReference type="EC" id="3.5.1.108" evidence="1"/>
<dbReference type="EMBL" id="AJ749949">
    <property type="protein sequence ID" value="CAG44822.1"/>
    <property type="molecule type" value="Genomic_DNA"/>
</dbReference>
<dbReference type="RefSeq" id="WP_003017478.1">
    <property type="nucleotide sequence ID" value="NZ_CP010290.1"/>
</dbReference>
<dbReference type="RefSeq" id="YP_169250.1">
    <property type="nucleotide sequence ID" value="NC_006570.2"/>
</dbReference>
<dbReference type="SMR" id="Q5NI92"/>
<dbReference type="IntAct" id="Q5NI92">
    <property type="interactions" value="1"/>
</dbReference>
<dbReference type="STRING" id="177416.FTT_0189"/>
<dbReference type="EnsemblBacteria" id="CAG44822">
    <property type="protein sequence ID" value="CAG44822"/>
    <property type="gene ID" value="FTT_0189"/>
</dbReference>
<dbReference type="KEGG" id="ftu:FTT_0189"/>
<dbReference type="PATRIC" id="fig|177416.18.peg.209"/>
<dbReference type="eggNOG" id="COG0774">
    <property type="taxonomic scope" value="Bacteria"/>
</dbReference>
<dbReference type="OrthoDB" id="9802746at2"/>
<dbReference type="UniPathway" id="UPA00359">
    <property type="reaction ID" value="UER00478"/>
</dbReference>
<dbReference type="Proteomes" id="UP000001174">
    <property type="component" value="Chromosome"/>
</dbReference>
<dbReference type="GO" id="GO:0016020">
    <property type="term" value="C:membrane"/>
    <property type="evidence" value="ECO:0007669"/>
    <property type="project" value="GOC"/>
</dbReference>
<dbReference type="GO" id="GO:0046872">
    <property type="term" value="F:metal ion binding"/>
    <property type="evidence" value="ECO:0007669"/>
    <property type="project" value="UniProtKB-KW"/>
</dbReference>
<dbReference type="GO" id="GO:0103117">
    <property type="term" value="F:UDP-3-O-acyl-N-acetylglucosamine deacetylase activity"/>
    <property type="evidence" value="ECO:0007669"/>
    <property type="project" value="UniProtKB-UniRule"/>
</dbReference>
<dbReference type="GO" id="GO:0009245">
    <property type="term" value="P:lipid A biosynthetic process"/>
    <property type="evidence" value="ECO:0007669"/>
    <property type="project" value="UniProtKB-UniRule"/>
</dbReference>
<dbReference type="Gene3D" id="3.30.230.20">
    <property type="entry name" value="lpxc deacetylase, domain 1"/>
    <property type="match status" value="1"/>
</dbReference>
<dbReference type="Gene3D" id="3.30.1700.10">
    <property type="entry name" value="lpxc deacetylase, domain 2"/>
    <property type="match status" value="1"/>
</dbReference>
<dbReference type="HAMAP" id="MF_00388">
    <property type="entry name" value="LpxC"/>
    <property type="match status" value="1"/>
</dbReference>
<dbReference type="InterPro" id="IPR020568">
    <property type="entry name" value="Ribosomal_Su5_D2-typ_SF"/>
</dbReference>
<dbReference type="InterPro" id="IPR004463">
    <property type="entry name" value="UDP-acyl_GlcNac_deAcase"/>
</dbReference>
<dbReference type="InterPro" id="IPR011334">
    <property type="entry name" value="UDP-acyl_GlcNac_deAcase_C"/>
</dbReference>
<dbReference type="InterPro" id="IPR015870">
    <property type="entry name" value="UDP-acyl_N-AcGlcN_deAcase_N"/>
</dbReference>
<dbReference type="NCBIfam" id="TIGR00325">
    <property type="entry name" value="lpxC"/>
    <property type="match status" value="1"/>
</dbReference>
<dbReference type="PANTHER" id="PTHR33694">
    <property type="entry name" value="UDP-3-O-ACYL-N-ACETYLGLUCOSAMINE DEACETYLASE 1, MITOCHONDRIAL-RELATED"/>
    <property type="match status" value="1"/>
</dbReference>
<dbReference type="PANTHER" id="PTHR33694:SF1">
    <property type="entry name" value="UDP-3-O-ACYL-N-ACETYLGLUCOSAMINE DEACETYLASE 1, MITOCHONDRIAL-RELATED"/>
    <property type="match status" value="1"/>
</dbReference>
<dbReference type="Pfam" id="PF03331">
    <property type="entry name" value="LpxC"/>
    <property type="match status" value="1"/>
</dbReference>
<dbReference type="SUPFAM" id="SSF54211">
    <property type="entry name" value="Ribosomal protein S5 domain 2-like"/>
    <property type="match status" value="2"/>
</dbReference>